<feature type="chain" id="PRO_0000218291" description="Chagasin">
    <location>
        <begin position="1"/>
        <end position="110"/>
    </location>
</feature>
<feature type="short sequence motif" description="BC loop" evidence="3 4 5 6">
    <location>
        <begin position="29"/>
        <end position="34"/>
    </location>
</feature>
<feature type="short sequence motif" description="DE loop" evidence="3 4 5 6">
    <location>
        <begin position="59"/>
        <end position="68"/>
    </location>
</feature>
<feature type="short sequence motif" description="FG loop" evidence="3 4 5 6">
    <location>
        <begin position="91"/>
        <end position="100"/>
    </location>
</feature>
<feature type="strand" evidence="19">
    <location>
        <begin position="3"/>
        <end position="6"/>
    </location>
</feature>
<feature type="helix" evidence="18">
    <location>
        <begin position="7"/>
        <end position="9"/>
    </location>
</feature>
<feature type="strand" evidence="18">
    <location>
        <begin position="13"/>
        <end position="17"/>
    </location>
</feature>
<feature type="strand" evidence="18">
    <location>
        <begin position="21"/>
        <end position="28"/>
    </location>
</feature>
<feature type="helix" evidence="18">
    <location>
        <begin position="30"/>
        <end position="32"/>
    </location>
</feature>
<feature type="strand" evidence="18">
    <location>
        <begin position="35"/>
        <end position="38"/>
    </location>
</feature>
<feature type="turn" evidence="18">
    <location>
        <begin position="39"/>
        <end position="41"/>
    </location>
</feature>
<feature type="strand" evidence="18">
    <location>
        <begin position="42"/>
        <end position="44"/>
    </location>
</feature>
<feature type="turn" evidence="18">
    <location>
        <begin position="48"/>
        <end position="50"/>
    </location>
</feature>
<feature type="strand" evidence="18">
    <location>
        <begin position="51"/>
        <end position="58"/>
    </location>
</feature>
<feature type="strand" evidence="20">
    <location>
        <begin position="63"/>
        <end position="66"/>
    </location>
</feature>
<feature type="strand" evidence="18">
    <location>
        <begin position="69"/>
        <end position="77"/>
    </location>
</feature>
<feature type="strand" evidence="18">
    <location>
        <begin position="79"/>
        <end position="90"/>
    </location>
</feature>
<feature type="turn" evidence="18">
    <location>
        <begin position="92"/>
        <end position="94"/>
    </location>
</feature>
<feature type="turn" evidence="17">
    <location>
        <begin position="97"/>
        <end position="99"/>
    </location>
</feature>
<feature type="strand" evidence="18">
    <location>
        <begin position="101"/>
        <end position="110"/>
    </location>
</feature>
<proteinExistence type="evidence at protein level"/>
<keyword id="KW-0002">3D-structure</keyword>
<keyword id="KW-0968">Cytoplasmic vesicle</keyword>
<keyword id="KW-0646">Protease inhibitor</keyword>
<keyword id="KW-0789">Thiol protease inhibitor</keyword>
<reference key="1">
    <citation type="journal article" date="2001" name="J. Cell Sci.">
        <title>Identification, characterization and localization of chagasin, a tight-binding cysteine protease inhibitor in Trypanosoma cruzi.</title>
        <authorList>
            <person name="Monteiro A.C.S."/>
            <person name="Abrahamson M."/>
            <person name="Lima A.P.C.A."/>
            <person name="Vannier-Santos M.A."/>
            <person name="Scharfstein J."/>
        </authorList>
    </citation>
    <scope>NUCLEOTIDE SEQUENCE [MRNA]</scope>
    <scope>FUNCTION</scope>
    <scope>INTERACTION WITH CRUZIPAIN</scope>
    <scope>SUBCELLULAR LOCATION</scope>
    <scope>DEVELOPMENTAL STAGE</scope>
    <source>
        <strain>Dm28c</strain>
    </source>
</reference>
<reference evidence="9" key="2">
    <citation type="journal article" date="2006" name="J. Mol. Biol.">
        <title>Solution structure and backbone dynamics of the Trypanosoma cruzi cysteine protease inhibitor chagasin.</title>
        <authorList>
            <person name="Salmon D."/>
            <person name="do Aido-Machado R."/>
            <person name="Diehl A."/>
            <person name="Leidert M."/>
            <person name="Schmetzer O."/>
            <person name="de A Lima A.P."/>
            <person name="Scharfstein J."/>
            <person name="Oschkinat H."/>
            <person name="Pires J.R."/>
        </authorList>
    </citation>
    <scope>STRUCTURE BY NMR OF 2-110</scope>
    <scope>INTERACTION WITH CRUZIPAIN</scope>
    <source>
        <strain evidence="2">Dm28c</strain>
    </source>
</reference>
<reference evidence="11 12" key="3">
    <citation type="journal article" date="2007" name="J. Mol. Biol.">
        <title>Crystal structure of the parasite protease inhibitor chagasin in complex with a host target cysteine protease.</title>
        <authorList>
            <person name="Ljunggren A."/>
            <person name="Redzynia I."/>
            <person name="Alvarez-Fernandez M."/>
            <person name="Abrahamson M."/>
            <person name="Mort J.S."/>
            <person name="Krupa J.C."/>
            <person name="Jaskolski M."/>
            <person name="Bujacz G."/>
        </authorList>
    </citation>
    <scope>X-RAY CRYSTALLOGRAPHY (1.70 ANGSTROMS) IN COMPLEX WITH HUMAN CTSL</scope>
    <scope>FUNCTION</scope>
    <scope>MOTIF</scope>
</reference>
<reference evidence="10" key="4">
    <citation type="journal article" date="2007" name="J. Struct. Biol.">
        <title>Crystal structure of chagasin, the endogenous cysteine-protease inhibitor from Trypanosoma cruzi.</title>
        <authorList>
            <person name="Figueiredo da Silva A.A."/>
            <person name="de Carvalho Vieira L."/>
            <person name="Krieger M.A."/>
            <person name="Goldenberg S."/>
            <person name="Zanchin N.I."/>
            <person name="Guimaraes B.G."/>
        </authorList>
    </citation>
    <scope>X-RAY CRYSTALLOGRAPHY (1.70 ANGSTROMS)</scope>
</reference>
<reference evidence="13" key="5">
    <citation type="journal article" date="2007" name="Structure">
        <title>The structure of chagasin in complex with a cysteine protease clarifies the binding mode and evolution of an inhibitor family.</title>
        <authorList>
            <person name="Wang S.X."/>
            <person name="Pandey K.C."/>
            <person name="Scharfstein J."/>
            <person name="Whisstock J."/>
            <person name="Huang R.K."/>
            <person name="Jacobelli J."/>
            <person name="Fletterick R.J."/>
            <person name="Rosenthal P.J."/>
            <person name="Abrahamson M."/>
            <person name="Brinen L.S."/>
            <person name="Rossi A."/>
            <person name="Sali A."/>
            <person name="McKerrow J.H."/>
        </authorList>
    </citation>
    <scope>X-RAY CRYSTALLOGRAPHY (2.20 ANGSTROMS) IN COMPLEX WITH P.FALCIPARUM FP2A</scope>
    <scope>FUNCTION</scope>
    <scope>MOTIF</scope>
</reference>
<reference evidence="14 15" key="6">
    <citation type="journal article" date="2008" name="J. Biol. Chem.">
        <title>Displacement of the occluding loop by the parasite protein, chagasin, results in efficient inhibition of human cathepsin B.</title>
        <authorList>
            <person name="Redzynia I."/>
            <person name="Ljunggren A."/>
            <person name="Abrahamson M."/>
            <person name="Mort J.S."/>
            <person name="Krupa J.C."/>
            <person name="Jaskolski M."/>
            <person name="Bujacz G."/>
        </authorList>
    </citation>
    <scope>X-RAY CRYSTALLOGRAPHY (1.80 ANGSTROMS) IN COMPLEX WITH HUMAN CTSB</scope>
    <scope>FUNCTION</scope>
    <scope>MOTIF</scope>
</reference>
<reference evidence="16" key="7">
    <citation type="journal article" date="2009" name="FEBS J.">
        <title>Crystal structure of the parasite inhibitor chagasin in complex with papain allows identification of structural requirements for broad reactivity and specificity determinants for target proteases.</title>
        <authorList>
            <person name="Redzynia I."/>
            <person name="Ljunggren A."/>
            <person name="Bujacz A."/>
            <person name="Abrahamson M."/>
            <person name="Jaskolski M."/>
            <person name="Bujacz G."/>
        </authorList>
    </citation>
    <scope>X-RAY CRYSTALLOGRAPHY (1.86 ANGSTROMS) IN COMPLEX WITH C.PAPAYA PAPAIN</scope>
    <scope>FUNCTION</scope>
    <scope>MOTIF</scope>
</reference>
<organism>
    <name type="scientific">Trypanosoma cruzi</name>
    <dbReference type="NCBI Taxonomy" id="5693"/>
    <lineage>
        <taxon>Eukaryota</taxon>
        <taxon>Discoba</taxon>
        <taxon>Euglenozoa</taxon>
        <taxon>Kinetoplastea</taxon>
        <taxon>Metakinetoplastina</taxon>
        <taxon>Trypanosomatida</taxon>
        <taxon>Trypanosomatidae</taxon>
        <taxon>Trypanosoma</taxon>
        <taxon>Schizotrypanum</taxon>
    </lineage>
</organism>
<dbReference type="EMBL" id="AJ299433">
    <property type="protein sequence ID" value="CAC39242.1"/>
    <property type="molecule type" value="mRNA"/>
</dbReference>
<dbReference type="PDB" id="2FO8">
    <property type="method" value="NMR"/>
    <property type="chains" value="A=2-110"/>
</dbReference>
<dbReference type="PDB" id="2H7W">
    <property type="method" value="X-ray"/>
    <property type="resolution" value="1.70 A"/>
    <property type="chains" value="A/B=1-110"/>
</dbReference>
<dbReference type="PDB" id="2NNR">
    <property type="method" value="X-ray"/>
    <property type="resolution" value="1.70 A"/>
    <property type="chains" value="A/B=1-110"/>
</dbReference>
<dbReference type="PDB" id="2NQD">
    <property type="method" value="X-ray"/>
    <property type="resolution" value="1.75 A"/>
    <property type="chains" value="A=2-110"/>
</dbReference>
<dbReference type="PDB" id="2OUL">
    <property type="method" value="X-ray"/>
    <property type="resolution" value="2.20 A"/>
    <property type="chains" value="B=1-110"/>
</dbReference>
<dbReference type="PDB" id="3CBJ">
    <property type="method" value="X-ray"/>
    <property type="resolution" value="1.80 A"/>
    <property type="chains" value="B=1-110"/>
</dbReference>
<dbReference type="PDB" id="3CBK">
    <property type="method" value="X-ray"/>
    <property type="resolution" value="2.67 A"/>
    <property type="chains" value="B=1-110"/>
</dbReference>
<dbReference type="PDB" id="3E1Z">
    <property type="method" value="X-ray"/>
    <property type="resolution" value="1.86 A"/>
    <property type="chains" value="A=1-110"/>
</dbReference>
<dbReference type="PDBsum" id="2FO8"/>
<dbReference type="PDBsum" id="2H7W"/>
<dbReference type="PDBsum" id="2NNR"/>
<dbReference type="PDBsum" id="2NQD"/>
<dbReference type="PDBsum" id="2OUL"/>
<dbReference type="PDBsum" id="3CBJ"/>
<dbReference type="PDBsum" id="3CBK"/>
<dbReference type="PDBsum" id="3E1Z"/>
<dbReference type="BMRB" id="Q966X9"/>
<dbReference type="SMR" id="Q966X9"/>
<dbReference type="DIP" id="DIP-29312N"/>
<dbReference type="IntAct" id="Q966X9">
    <property type="interactions" value="1"/>
</dbReference>
<dbReference type="MEROPS" id="I42.001"/>
<dbReference type="VEuPathDB" id="TriTrypDB:BCY84_05574"/>
<dbReference type="VEuPathDB" id="TriTrypDB:C3747_11g420c"/>
<dbReference type="VEuPathDB" id="TriTrypDB:C4B63_187g86c"/>
<dbReference type="VEuPathDB" id="TriTrypDB:C4B63_32g1409c"/>
<dbReference type="VEuPathDB" id="TriTrypDB:TcBrA4_0010400"/>
<dbReference type="VEuPathDB" id="TriTrypDB:TcCL_ESM08205"/>
<dbReference type="VEuPathDB" id="TriTrypDB:TcCLB.506801.80"/>
<dbReference type="VEuPathDB" id="TriTrypDB:TcCLB.511907.200"/>
<dbReference type="VEuPathDB" id="TriTrypDB:TcG_08207"/>
<dbReference type="VEuPathDB" id="TriTrypDB:TcYC6_0083230"/>
<dbReference type="OrthoDB" id="238326at2759"/>
<dbReference type="EvolutionaryTrace" id="Q966X9"/>
<dbReference type="GO" id="GO:0009986">
    <property type="term" value="C:cell surface"/>
    <property type="evidence" value="ECO:0000314"/>
    <property type="project" value="CACAO"/>
</dbReference>
<dbReference type="GO" id="GO:0020016">
    <property type="term" value="C:ciliary pocket"/>
    <property type="evidence" value="ECO:0000314"/>
    <property type="project" value="CACAO"/>
</dbReference>
<dbReference type="GO" id="GO:0031410">
    <property type="term" value="C:cytoplasmic vesicle"/>
    <property type="evidence" value="ECO:0000314"/>
    <property type="project" value="CACAO"/>
</dbReference>
<dbReference type="GO" id="GO:0004869">
    <property type="term" value="F:cysteine-type endopeptidase inhibitor activity"/>
    <property type="evidence" value="ECO:0000314"/>
    <property type="project" value="CACAO"/>
</dbReference>
<dbReference type="FunFam" id="2.60.40.2020:FF:000003">
    <property type="entry name" value="Cysteine peptidase inhibitor"/>
    <property type="match status" value="1"/>
</dbReference>
<dbReference type="Gene3D" id="2.60.40.2020">
    <property type="match status" value="1"/>
</dbReference>
<dbReference type="InterPro" id="IPR036331">
    <property type="entry name" value="Chagasin-like_sf"/>
</dbReference>
<dbReference type="InterPro" id="IPR052781">
    <property type="entry name" value="Cys_protease_inhibitor_I42"/>
</dbReference>
<dbReference type="InterPro" id="IPR018990">
    <property type="entry name" value="Prot_inh_I42_chagasin"/>
</dbReference>
<dbReference type="PANTHER" id="PTHR36530:SF1">
    <property type="entry name" value="AMOEBIASIN-1"/>
    <property type="match status" value="1"/>
</dbReference>
<dbReference type="PANTHER" id="PTHR36530">
    <property type="entry name" value="INHIBITOR OF CYSTEINE PEPTIDASE"/>
    <property type="match status" value="1"/>
</dbReference>
<dbReference type="Pfam" id="PF09394">
    <property type="entry name" value="Inhibitor_I42"/>
    <property type="match status" value="1"/>
</dbReference>
<dbReference type="SUPFAM" id="SSF141066">
    <property type="entry name" value="ICP-like"/>
    <property type="match status" value="1"/>
</dbReference>
<accession>Q966X9</accession>
<sequence>MSHKVTKAHNGATLTVAVGELVEIQLPSNPTTGFAWYFEGGTKESPNESMFTVENKYFPPDSKLLGAGGTEHFHVTVKAAGTHAVNLTYMRPWTGPSHDSERFTVYLKAN</sequence>
<comment type="function">
    <text evidence="1 3 4 5 6">Cysteine protease inhibitor (PubMed:11719560, PubMed:17502099, PubMed:17561110, PubMed:18515357, PubMed:19143838). Inhibits cysteine protease cruzipain (PubMed:11719560, PubMed:17561110).</text>
</comment>
<comment type="subunit">
    <text evidence="1 2">Interacts with cruzipain.</text>
</comment>
<comment type="interaction">
    <interactant intactId="EBI-15637083">
        <id>Q966X9</id>
    </interactant>
    <interactant intactId="EBI-15637102">
        <id>Q9NBD4</id>
    </interactant>
    <organismsDiffer>true</organismsDiffer>
    <experiments>2</experiments>
</comment>
<comment type="subcellular location">
    <subcellularLocation>
        <location evidence="1">Flagellar pocket</location>
    </subcellularLocation>
    <subcellularLocation>
        <location evidence="1">Cytoplasmic vesicle</location>
    </subcellularLocation>
    <subcellularLocation>
        <location evidence="1">Cell surface</location>
    </subcellularLocation>
    <text>Flagellar pocket and cytoplasmic vesicles of trypomastigotes and to the cell surface of amastigotes.</text>
</comment>
<comment type="developmental stage">
    <text evidence="1">Highly expressed in trypomastigotes and to a lesser extent in epimastigotes and amastigotes (at protein level).</text>
</comment>
<comment type="domain">
    <text evidence="3 4 5 6">The BC, DE and FG loops form a tripartite wedge that blocks the substrate-binding site of target cysteine proteases (PubMed:17502099, PubMed:17561110, PubMed:18515357, PubMed:19143838). The BC loop interacts with the catalytically active cysteine and histidine residues of the protease catalytic center (PubMed:17502099, PubMed:17561110, PubMed:18515357, PubMed:19143838).</text>
</comment>
<comment type="similarity">
    <text evidence="8">Belongs to the protease inhibitor I42 family.</text>
</comment>
<gene>
    <name type="primary">cha</name>
</gene>
<protein>
    <recommendedName>
        <fullName evidence="7">Chagasin</fullName>
    </recommendedName>
    <alternativeName>
        <fullName evidence="7">Cysteine protease inhibitor</fullName>
    </alternativeName>
</protein>
<evidence type="ECO:0000269" key="1">
    <source>
    </source>
</evidence>
<evidence type="ECO:0000269" key="2">
    <source>
    </source>
</evidence>
<evidence type="ECO:0000269" key="3">
    <source>
    </source>
</evidence>
<evidence type="ECO:0000269" key="4">
    <source>
    </source>
</evidence>
<evidence type="ECO:0000269" key="5">
    <source>
    </source>
</evidence>
<evidence type="ECO:0000269" key="6">
    <source>
    </source>
</evidence>
<evidence type="ECO:0000303" key="7">
    <source>
    </source>
</evidence>
<evidence type="ECO:0000305" key="8"/>
<evidence type="ECO:0007744" key="9">
    <source>
        <dbReference type="PDB" id="2FO8"/>
    </source>
</evidence>
<evidence type="ECO:0007744" key="10">
    <source>
        <dbReference type="PDB" id="2H7W"/>
    </source>
</evidence>
<evidence type="ECO:0007744" key="11">
    <source>
        <dbReference type="PDB" id="2NNR"/>
    </source>
</evidence>
<evidence type="ECO:0007744" key="12">
    <source>
        <dbReference type="PDB" id="2NQD"/>
    </source>
</evidence>
<evidence type="ECO:0007744" key="13">
    <source>
        <dbReference type="PDB" id="2OUL"/>
    </source>
</evidence>
<evidence type="ECO:0007744" key="14">
    <source>
        <dbReference type="PDB" id="3CBJ"/>
    </source>
</evidence>
<evidence type="ECO:0007744" key="15">
    <source>
        <dbReference type="PDB" id="3CBK"/>
    </source>
</evidence>
<evidence type="ECO:0007744" key="16">
    <source>
        <dbReference type="PDB" id="3E1Z"/>
    </source>
</evidence>
<evidence type="ECO:0007829" key="17">
    <source>
        <dbReference type="PDB" id="2FO8"/>
    </source>
</evidence>
<evidence type="ECO:0007829" key="18">
    <source>
        <dbReference type="PDB" id="2H7W"/>
    </source>
</evidence>
<evidence type="ECO:0007829" key="19">
    <source>
        <dbReference type="PDB" id="2NNR"/>
    </source>
</evidence>
<evidence type="ECO:0007829" key="20">
    <source>
        <dbReference type="PDB" id="2NQD"/>
    </source>
</evidence>
<name>CHAG_TRYCR</name>